<gene>
    <name evidence="4" type="primary">STS-03</name>
    <name type="ORF">POSPLDRAFT_99496</name>
</gene>
<comment type="function">
    <text evidence="3">Terpene cyclase that catalyzes the cyclization of farnesyl diphosphate (FPP) to various sesquiterpenes, including beta-elemene gamma-cadinene, delta-cadinene, and alpha-cadinene.</text>
</comment>
<comment type="catalytic activity">
    <reaction evidence="3">
        <text>(2E,6E)-farnesyl diphosphate = delta-cadinene + diphosphate</text>
        <dbReference type="Rhea" id="RHEA:56556"/>
        <dbReference type="ChEBI" id="CHEBI:33019"/>
        <dbReference type="ChEBI" id="CHEBI:140564"/>
        <dbReference type="ChEBI" id="CHEBI:175763"/>
    </reaction>
    <physiologicalReaction direction="left-to-right" evidence="3">
        <dbReference type="Rhea" id="RHEA:56557"/>
    </physiologicalReaction>
</comment>
<comment type="cofactor">
    <cofactor evidence="3">
        <name>Mg(2+)</name>
        <dbReference type="ChEBI" id="CHEBI:18420"/>
    </cofactor>
</comment>
<comment type="domain">
    <text evidence="6">The conserved DDXXD and NSE/DTE motifs are important for the catalytic activity, presumably through binding to Mg(2+).</text>
</comment>
<comment type="similarity">
    <text evidence="5">Belongs to the terpene synthase family.</text>
</comment>
<comment type="sequence caution" evidence="5">
    <conflict type="erroneous gene model prediction">
        <sequence resource="EMBL-CDS" id="EED82142"/>
    </conflict>
</comment>
<dbReference type="EC" id="4.2.3.-" evidence="3"/>
<dbReference type="EMBL" id="LC378427">
    <property type="protein sequence ID" value="BBD74519.1"/>
    <property type="molecule type" value="mRNA"/>
</dbReference>
<dbReference type="EMBL" id="EQ966293">
    <property type="protein sequence ID" value="EED82142.1"/>
    <property type="status" value="ALT_SEQ"/>
    <property type="molecule type" value="Genomic_DNA"/>
</dbReference>
<dbReference type="RefSeq" id="XP_002472646.1">
    <property type="nucleotide sequence ID" value="XM_002472601.1"/>
</dbReference>
<dbReference type="SMR" id="A0A348B781"/>
<dbReference type="KEGG" id="ppl:POSPLDRAFT_99496"/>
<dbReference type="HOGENOM" id="CLU_042538_2_1_1"/>
<dbReference type="InParanoid" id="A0A348B781"/>
<dbReference type="OrthoDB" id="2861623at2759"/>
<dbReference type="GO" id="GO:0046872">
    <property type="term" value="F:metal ion binding"/>
    <property type="evidence" value="ECO:0007669"/>
    <property type="project" value="UniProtKB-KW"/>
</dbReference>
<dbReference type="GO" id="GO:0010333">
    <property type="term" value="F:terpene synthase activity"/>
    <property type="evidence" value="ECO:0007669"/>
    <property type="project" value="InterPro"/>
</dbReference>
<dbReference type="GO" id="GO:0008299">
    <property type="term" value="P:isoprenoid biosynthetic process"/>
    <property type="evidence" value="ECO:0007669"/>
    <property type="project" value="UniProtKB-ARBA"/>
</dbReference>
<dbReference type="Gene3D" id="1.10.600.10">
    <property type="entry name" value="Farnesyl Diphosphate Synthase"/>
    <property type="match status" value="1"/>
</dbReference>
<dbReference type="InterPro" id="IPR008949">
    <property type="entry name" value="Isoprenoid_synthase_dom_sf"/>
</dbReference>
<dbReference type="InterPro" id="IPR034686">
    <property type="entry name" value="Terpene_cyclase-like_2"/>
</dbReference>
<dbReference type="PANTHER" id="PTHR35201:SF4">
    <property type="entry name" value="BETA-PINACENE SYNTHASE-RELATED"/>
    <property type="match status" value="1"/>
</dbReference>
<dbReference type="PANTHER" id="PTHR35201">
    <property type="entry name" value="TERPENE SYNTHASE"/>
    <property type="match status" value="1"/>
</dbReference>
<dbReference type="Pfam" id="PF19086">
    <property type="entry name" value="Terpene_syn_C_2"/>
    <property type="match status" value="1"/>
</dbReference>
<dbReference type="SFLD" id="SFLDS00005">
    <property type="entry name" value="Isoprenoid_Synthase_Type_I"/>
    <property type="match status" value="1"/>
</dbReference>
<dbReference type="SFLD" id="SFLDG01020">
    <property type="entry name" value="Terpene_Cyclase_Like_2"/>
    <property type="match status" value="1"/>
</dbReference>
<dbReference type="SUPFAM" id="SSF48576">
    <property type="entry name" value="Terpenoid synthases"/>
    <property type="match status" value="1"/>
</dbReference>
<sequence length="365" mass="40862">MGSISSTPSQKSPVFPARSLLPSDIVAVRPEGDEAKVLKFPDLVKSIPFPLRLNPYIRFVSAESDAFIIEYANFSEKQRNRFIGLNAGLLCGMCYAECGPEQLRVCCDFMSFLFNLDDWSDEFDTAGTKGLEEAVMNTLYHPDTYVSDTVAARTARSWWTRMLKTVGPRCRQRFVETLGFYFKAILQQAADRSSKTIPDLETYISLRRDTSGCKTGFALIEYAAGIDLPNEVVDHPIIQSLLDATNDCVSWANDILSYNREQSRGDTHNLVPVIMQTVGIDRQAAIDYAGDLCNKSVAHFLEGKAALPSWGKEVDVQVEQYVQGLEDWIIANAEWSFMTERYFGKDGPKIRKGLQVSLLPVVGFD</sequence>
<evidence type="ECO:0000250" key="1">
    <source>
        <dbReference type="UniProtKB" id="B5HDJ6"/>
    </source>
</evidence>
<evidence type="ECO:0000250" key="2">
    <source>
        <dbReference type="UniProtKB" id="Q9UR08"/>
    </source>
</evidence>
<evidence type="ECO:0000269" key="3">
    <source>
    </source>
</evidence>
<evidence type="ECO:0000303" key="4">
    <source>
    </source>
</evidence>
<evidence type="ECO:0000305" key="5"/>
<evidence type="ECO:0000305" key="6">
    <source>
    </source>
</evidence>
<feature type="chain" id="PRO_0000451388" description="Sesquiterpene synthase 3">
    <location>
        <begin position="1"/>
        <end position="365"/>
    </location>
</feature>
<feature type="short sequence motif" description="DDXXD motif" evidence="6">
    <location>
        <begin position="117"/>
        <end position="121"/>
    </location>
</feature>
<feature type="short sequence motif" description="NSE/DTE motif" evidence="6">
    <location>
        <begin position="253"/>
        <end position="261"/>
    </location>
</feature>
<feature type="binding site" evidence="2">
    <location>
        <position position="117"/>
    </location>
    <ligand>
        <name>Mg(2+)</name>
        <dbReference type="ChEBI" id="CHEBI:18420"/>
        <label>1</label>
    </ligand>
</feature>
<feature type="binding site" evidence="2">
    <location>
        <position position="117"/>
    </location>
    <ligand>
        <name>Mg(2+)</name>
        <dbReference type="ChEBI" id="CHEBI:18420"/>
        <label>2</label>
    </ligand>
</feature>
<feature type="binding site" evidence="2">
    <location>
        <position position="253"/>
    </location>
    <ligand>
        <name>Mg(2+)</name>
        <dbReference type="ChEBI" id="CHEBI:18420"/>
        <label>3</label>
    </ligand>
</feature>
<feature type="binding site" evidence="2">
    <location>
        <position position="257"/>
    </location>
    <ligand>
        <name>Mg(2+)</name>
        <dbReference type="ChEBI" id="CHEBI:18420"/>
        <label>3</label>
    </ligand>
</feature>
<feature type="binding site" evidence="2">
    <location>
        <position position="261"/>
    </location>
    <ligand>
        <name>Mg(2+)</name>
        <dbReference type="ChEBI" id="CHEBI:18420"/>
        <label>3</label>
    </ligand>
</feature>
<feature type="binding site" evidence="2">
    <location>
        <position position="341"/>
    </location>
    <ligand>
        <name>(2E,6E)-farnesyl diphosphate</name>
        <dbReference type="ChEBI" id="CHEBI:175763"/>
    </ligand>
</feature>
<feature type="binding site" evidence="2">
    <location>
        <position position="342"/>
    </location>
    <ligand>
        <name>(2E,6E)-farnesyl diphosphate</name>
        <dbReference type="ChEBI" id="CHEBI:175763"/>
    </ligand>
</feature>
<feature type="site" description="Plays a critical role in the stabilization of intermediate cation" evidence="1">
    <location>
        <position position="114"/>
    </location>
</feature>
<name>STS3_POSPM</name>
<proteinExistence type="evidence at protein level"/>
<reference key="1">
    <citation type="journal article" date="2018" name="Microb. Biotechnol.">
        <title>Insight into metabolic diversity of the brown-rot basidiomycete Postia placenta responsible for sesquiterpene biosynthesis: semi-comprehensive screening of cytochrome P450 monooxygenase involved in protoilludene metabolism.</title>
        <authorList>
            <person name="Ichinose H."/>
            <person name="Kitaoka T."/>
        </authorList>
    </citation>
    <scope>NUCLEOTIDE SEQUENCE [MRNA]</scope>
    <scope>FUNCTION</scope>
    <scope>DOMAIN</scope>
    <scope>CATALYTIC ACTIVITY</scope>
    <source>
        <strain>ATCC 44394 / Madison 698-R</strain>
    </source>
</reference>
<reference key="2">
    <citation type="journal article" date="2009" name="Proc. Natl. Acad. Sci. U.S.A.">
        <title>Genome, transcriptome, and secretome analysis of wood decay fungus Postia placenta supports unique mechanisms of lignocellulose conversion.</title>
        <authorList>
            <person name="Martinez D."/>
            <person name="Challacombe J."/>
            <person name="Morgenstern I."/>
            <person name="Hibbett D."/>
            <person name="Schmoll M."/>
            <person name="Kubicek C.P."/>
            <person name="Ferreira P."/>
            <person name="Ruiz-Duenas F.J."/>
            <person name="Martinez A.T."/>
            <person name="Kersten P."/>
            <person name="Hammel K.E."/>
            <person name="Vanden Wymelenberg A."/>
            <person name="Gaskell J."/>
            <person name="Lindquist E."/>
            <person name="Sabat G."/>
            <person name="Splinter BonDurant S."/>
            <person name="Larrondo L.F."/>
            <person name="Canessa P."/>
            <person name="Vicuna R."/>
            <person name="Yadav J."/>
            <person name="Doddapaneni H."/>
            <person name="Subramanian V."/>
            <person name="Pisabarro A.G."/>
            <person name="Lavin J.L."/>
            <person name="Oguiza J.A."/>
            <person name="Master E."/>
            <person name="Henrissat B."/>
            <person name="Coutinho P.M."/>
            <person name="Harris P."/>
            <person name="Magnuson J.K."/>
            <person name="Baker S.E."/>
            <person name="Bruno K."/>
            <person name="Kenealy W."/>
            <person name="Hoegger P.J."/>
            <person name="Kuees U."/>
            <person name="Ramaiya P."/>
            <person name="Lucas S."/>
            <person name="Salamov A."/>
            <person name="Shapiro H."/>
            <person name="Tu H."/>
            <person name="Chee C.L."/>
            <person name="Misra M."/>
            <person name="Xie G."/>
            <person name="Teter S."/>
            <person name="Yaver D."/>
            <person name="James T."/>
            <person name="Mokrejs M."/>
            <person name="Pospisek M."/>
            <person name="Grigoriev I.V."/>
            <person name="Brettin T."/>
            <person name="Rokhsar D."/>
            <person name="Berka R."/>
            <person name="Cullen D."/>
        </authorList>
    </citation>
    <scope>NUCLEOTIDE SEQUENCE [LARGE SCALE GENOMIC DNA]</scope>
    <source>
        <strain>ATCC 44394 / Madison 698-R</strain>
    </source>
</reference>
<accession>A0A348B781</accession>
<accession>B8PAF1</accession>
<organism>
    <name type="scientific">Postia placenta (strain ATCC 44394 / Madison 698-R)</name>
    <name type="common">Brown rot fungus</name>
    <name type="synonym">Poria monticola</name>
    <dbReference type="NCBI Taxonomy" id="561896"/>
    <lineage>
        <taxon>Eukaryota</taxon>
        <taxon>Fungi</taxon>
        <taxon>Dikarya</taxon>
        <taxon>Basidiomycota</taxon>
        <taxon>Agaricomycotina</taxon>
        <taxon>Agaricomycetes</taxon>
        <taxon>Polyporales</taxon>
        <taxon>Adustoporiaceae</taxon>
        <taxon>Rhodonia</taxon>
    </lineage>
</organism>
<keyword id="KW-0456">Lyase</keyword>
<keyword id="KW-0460">Magnesium</keyword>
<keyword id="KW-0479">Metal-binding</keyword>
<protein>
    <recommendedName>
        <fullName evidence="4">Sesquiterpene synthase 3</fullName>
        <ecNumber evidence="3">4.2.3.-</ecNumber>
    </recommendedName>
    <alternativeName>
        <fullName evidence="4">Terpene cyclase 3</fullName>
    </alternativeName>
</protein>